<reference key="1">
    <citation type="submission" date="2009-03" db="EMBL/GenBank/DDBJ databases">
        <title>Complete genome sequence of Edwardsiella ictaluri 93-146.</title>
        <authorList>
            <person name="Williams M.L."/>
            <person name="Gillaspy A.F."/>
            <person name="Dyer D.W."/>
            <person name="Thune R.L."/>
            <person name="Waldbieser G.C."/>
            <person name="Schuster S.C."/>
            <person name="Gipson J."/>
            <person name="Zaitshik J."/>
            <person name="Landry C."/>
            <person name="Lawrence M.L."/>
        </authorList>
    </citation>
    <scope>NUCLEOTIDE SEQUENCE [LARGE SCALE GENOMIC DNA]</scope>
    <source>
        <strain>93-146</strain>
    </source>
</reference>
<dbReference type="EC" id="2.1.2.1" evidence="1"/>
<dbReference type="EMBL" id="CP001600">
    <property type="protein sequence ID" value="ACR70340.1"/>
    <property type="molecule type" value="Genomic_DNA"/>
</dbReference>
<dbReference type="RefSeq" id="WP_015872427.1">
    <property type="nucleotide sequence ID" value="NZ_CP169062.1"/>
</dbReference>
<dbReference type="SMR" id="C5BEV2"/>
<dbReference type="STRING" id="67780.B6E78_07600"/>
<dbReference type="GeneID" id="69540058"/>
<dbReference type="KEGG" id="eic:NT01EI_3190"/>
<dbReference type="PATRIC" id="fig|634503.3.peg.2850"/>
<dbReference type="HOGENOM" id="CLU_022477_2_1_6"/>
<dbReference type="OrthoDB" id="9803846at2"/>
<dbReference type="UniPathway" id="UPA00193"/>
<dbReference type="UniPathway" id="UPA00288">
    <property type="reaction ID" value="UER01023"/>
</dbReference>
<dbReference type="PHI-base" id="PHI:2962"/>
<dbReference type="Proteomes" id="UP000001485">
    <property type="component" value="Chromosome"/>
</dbReference>
<dbReference type="GO" id="GO:0005829">
    <property type="term" value="C:cytosol"/>
    <property type="evidence" value="ECO:0007669"/>
    <property type="project" value="TreeGrafter"/>
</dbReference>
<dbReference type="GO" id="GO:0004372">
    <property type="term" value="F:glycine hydroxymethyltransferase activity"/>
    <property type="evidence" value="ECO:0007669"/>
    <property type="project" value="UniProtKB-UniRule"/>
</dbReference>
<dbReference type="GO" id="GO:0030170">
    <property type="term" value="F:pyridoxal phosphate binding"/>
    <property type="evidence" value="ECO:0007669"/>
    <property type="project" value="UniProtKB-UniRule"/>
</dbReference>
<dbReference type="GO" id="GO:0019264">
    <property type="term" value="P:glycine biosynthetic process from serine"/>
    <property type="evidence" value="ECO:0007669"/>
    <property type="project" value="UniProtKB-UniRule"/>
</dbReference>
<dbReference type="GO" id="GO:0035999">
    <property type="term" value="P:tetrahydrofolate interconversion"/>
    <property type="evidence" value="ECO:0007669"/>
    <property type="project" value="UniProtKB-UniRule"/>
</dbReference>
<dbReference type="CDD" id="cd00378">
    <property type="entry name" value="SHMT"/>
    <property type="match status" value="1"/>
</dbReference>
<dbReference type="FunFam" id="3.40.640.10:FF:000001">
    <property type="entry name" value="Serine hydroxymethyltransferase"/>
    <property type="match status" value="1"/>
</dbReference>
<dbReference type="FunFam" id="3.90.1150.10:FF:000003">
    <property type="entry name" value="Serine hydroxymethyltransferase"/>
    <property type="match status" value="1"/>
</dbReference>
<dbReference type="Gene3D" id="3.90.1150.10">
    <property type="entry name" value="Aspartate Aminotransferase, domain 1"/>
    <property type="match status" value="1"/>
</dbReference>
<dbReference type="Gene3D" id="3.40.640.10">
    <property type="entry name" value="Type I PLP-dependent aspartate aminotransferase-like (Major domain)"/>
    <property type="match status" value="1"/>
</dbReference>
<dbReference type="HAMAP" id="MF_00051">
    <property type="entry name" value="SHMT"/>
    <property type="match status" value="1"/>
</dbReference>
<dbReference type="InterPro" id="IPR015424">
    <property type="entry name" value="PyrdxlP-dep_Trfase"/>
</dbReference>
<dbReference type="InterPro" id="IPR015421">
    <property type="entry name" value="PyrdxlP-dep_Trfase_major"/>
</dbReference>
<dbReference type="InterPro" id="IPR015422">
    <property type="entry name" value="PyrdxlP-dep_Trfase_small"/>
</dbReference>
<dbReference type="InterPro" id="IPR001085">
    <property type="entry name" value="Ser_HO-MeTrfase"/>
</dbReference>
<dbReference type="InterPro" id="IPR049943">
    <property type="entry name" value="Ser_HO-MeTrfase-like"/>
</dbReference>
<dbReference type="InterPro" id="IPR019798">
    <property type="entry name" value="Ser_HO-MeTrfase_PLP_BS"/>
</dbReference>
<dbReference type="InterPro" id="IPR039429">
    <property type="entry name" value="SHMT-like_dom"/>
</dbReference>
<dbReference type="NCBIfam" id="NF000586">
    <property type="entry name" value="PRK00011.1"/>
    <property type="match status" value="1"/>
</dbReference>
<dbReference type="PANTHER" id="PTHR11680">
    <property type="entry name" value="SERINE HYDROXYMETHYLTRANSFERASE"/>
    <property type="match status" value="1"/>
</dbReference>
<dbReference type="PANTHER" id="PTHR11680:SF50">
    <property type="entry name" value="SERINE HYDROXYMETHYLTRANSFERASE"/>
    <property type="match status" value="1"/>
</dbReference>
<dbReference type="Pfam" id="PF00464">
    <property type="entry name" value="SHMT"/>
    <property type="match status" value="1"/>
</dbReference>
<dbReference type="PIRSF" id="PIRSF000412">
    <property type="entry name" value="SHMT"/>
    <property type="match status" value="1"/>
</dbReference>
<dbReference type="SUPFAM" id="SSF53383">
    <property type="entry name" value="PLP-dependent transferases"/>
    <property type="match status" value="1"/>
</dbReference>
<dbReference type="PROSITE" id="PS00096">
    <property type="entry name" value="SHMT"/>
    <property type="match status" value="1"/>
</dbReference>
<evidence type="ECO:0000255" key="1">
    <source>
        <dbReference type="HAMAP-Rule" id="MF_00051"/>
    </source>
</evidence>
<keyword id="KW-0028">Amino-acid biosynthesis</keyword>
<keyword id="KW-0963">Cytoplasm</keyword>
<keyword id="KW-0554">One-carbon metabolism</keyword>
<keyword id="KW-0663">Pyridoxal phosphate</keyword>
<keyword id="KW-0808">Transferase</keyword>
<protein>
    <recommendedName>
        <fullName evidence="1">Serine hydroxymethyltransferase</fullName>
        <shortName evidence="1">SHMT</shortName>
        <shortName evidence="1">Serine methylase</shortName>
        <ecNumber evidence="1">2.1.2.1</ecNumber>
    </recommendedName>
</protein>
<gene>
    <name evidence="1" type="primary">glyA</name>
    <name type="ordered locus">NT01EI_3190</name>
</gene>
<sequence length="417" mass="45527">MLKREMNIADYDTELWQAMQQEVTRQEQHIELIASENYTSPRVMQAQGSQLTNKYAEGYPGKRYYGGCQYVDQVEQLAIDRAKALFGADYANVQPHSGSQANFAVYTALLQPGDTVLGMNLAHGGHLTHGSPVNFSGKLYNVVPYGIDAHGRIDYDDLAAQAQRHRPKMIIGGFSAYSGVVDWARMREIANSIGAYLFVDMAHVAGLVAAGVYPNPIPHAHVVTTTTHKTLAGPRGGLILAKGLDETMYKKLNSAVFPGAQGGPLMHVIAAKAVALKEAMEPEFTRYQQQVAKNAKAMVDVFLQRGYKVVSGGTENHLFLLDLVDRQITGKEADAALGHANITVNKNSVPNDPQSPFVTSGIRIGTPAITRRGFKEAESRELAGWMCDVLDNIHDEATIACTKQKVLALCERLPVYA</sequence>
<name>GLYA_EDWI9</name>
<proteinExistence type="inferred from homology"/>
<accession>C5BEV2</accession>
<feature type="chain" id="PRO_1000202262" description="Serine hydroxymethyltransferase">
    <location>
        <begin position="1"/>
        <end position="417"/>
    </location>
</feature>
<feature type="binding site" evidence="1">
    <location>
        <position position="121"/>
    </location>
    <ligand>
        <name>(6S)-5,6,7,8-tetrahydrofolate</name>
        <dbReference type="ChEBI" id="CHEBI:57453"/>
    </ligand>
</feature>
<feature type="binding site" evidence="1">
    <location>
        <begin position="125"/>
        <end position="127"/>
    </location>
    <ligand>
        <name>(6S)-5,6,7,8-tetrahydrofolate</name>
        <dbReference type="ChEBI" id="CHEBI:57453"/>
    </ligand>
</feature>
<feature type="binding site" evidence="1">
    <location>
        <begin position="355"/>
        <end position="357"/>
    </location>
    <ligand>
        <name>(6S)-5,6,7,8-tetrahydrofolate</name>
        <dbReference type="ChEBI" id="CHEBI:57453"/>
    </ligand>
</feature>
<feature type="site" description="Plays an important role in substrate specificity" evidence="1">
    <location>
        <position position="228"/>
    </location>
</feature>
<feature type="modified residue" description="N6-(pyridoxal phosphate)lysine" evidence="1">
    <location>
        <position position="229"/>
    </location>
</feature>
<organism>
    <name type="scientific">Edwardsiella ictaluri (strain 93-146)</name>
    <dbReference type="NCBI Taxonomy" id="634503"/>
    <lineage>
        <taxon>Bacteria</taxon>
        <taxon>Pseudomonadati</taxon>
        <taxon>Pseudomonadota</taxon>
        <taxon>Gammaproteobacteria</taxon>
        <taxon>Enterobacterales</taxon>
        <taxon>Hafniaceae</taxon>
        <taxon>Edwardsiella</taxon>
    </lineage>
</organism>
<comment type="function">
    <text evidence="1">Catalyzes the reversible interconversion of serine and glycine with tetrahydrofolate (THF) serving as the one-carbon carrier. This reaction serves as the major source of one-carbon groups required for the biosynthesis of purines, thymidylate, methionine, and other important biomolecules. Also exhibits THF-independent aldolase activity toward beta-hydroxyamino acids, producing glycine and aldehydes, via a retro-aldol mechanism.</text>
</comment>
<comment type="catalytic activity">
    <reaction evidence="1">
        <text>(6R)-5,10-methylene-5,6,7,8-tetrahydrofolate + glycine + H2O = (6S)-5,6,7,8-tetrahydrofolate + L-serine</text>
        <dbReference type="Rhea" id="RHEA:15481"/>
        <dbReference type="ChEBI" id="CHEBI:15377"/>
        <dbReference type="ChEBI" id="CHEBI:15636"/>
        <dbReference type="ChEBI" id="CHEBI:33384"/>
        <dbReference type="ChEBI" id="CHEBI:57305"/>
        <dbReference type="ChEBI" id="CHEBI:57453"/>
        <dbReference type="EC" id="2.1.2.1"/>
    </reaction>
</comment>
<comment type="cofactor">
    <cofactor evidence="1">
        <name>pyridoxal 5'-phosphate</name>
        <dbReference type="ChEBI" id="CHEBI:597326"/>
    </cofactor>
</comment>
<comment type="pathway">
    <text evidence="1">One-carbon metabolism; tetrahydrofolate interconversion.</text>
</comment>
<comment type="pathway">
    <text evidence="1">Amino-acid biosynthesis; glycine biosynthesis; glycine from L-serine: step 1/1.</text>
</comment>
<comment type="subunit">
    <text evidence="1">Homodimer.</text>
</comment>
<comment type="subcellular location">
    <subcellularLocation>
        <location evidence="1">Cytoplasm</location>
    </subcellularLocation>
</comment>
<comment type="similarity">
    <text evidence="1">Belongs to the SHMT family.</text>
</comment>